<reference key="1">
    <citation type="submission" date="2007-05" db="EMBL/GenBank/DDBJ databases">
        <title>Complete sequence of chromosome of Acidiphilium cryptum JF-5.</title>
        <authorList>
            <consortium name="US DOE Joint Genome Institute"/>
            <person name="Copeland A."/>
            <person name="Lucas S."/>
            <person name="Lapidus A."/>
            <person name="Barry K."/>
            <person name="Detter J.C."/>
            <person name="Glavina del Rio T."/>
            <person name="Hammon N."/>
            <person name="Israni S."/>
            <person name="Dalin E."/>
            <person name="Tice H."/>
            <person name="Pitluck S."/>
            <person name="Sims D."/>
            <person name="Brettin T."/>
            <person name="Bruce D."/>
            <person name="Han C."/>
            <person name="Schmutz J."/>
            <person name="Larimer F."/>
            <person name="Land M."/>
            <person name="Hauser L."/>
            <person name="Kyrpides N."/>
            <person name="Kim E."/>
            <person name="Magnuson T."/>
            <person name="Richardson P."/>
        </authorList>
    </citation>
    <scope>NUCLEOTIDE SEQUENCE [LARGE SCALE GENOMIC DNA]</scope>
    <source>
        <strain>JF-5</strain>
    </source>
</reference>
<accession>A5G0T8</accession>
<gene>
    <name evidence="1" type="primary">glmU</name>
    <name type="ordered locus">Acry_2275</name>
</gene>
<name>GLMU_ACICJ</name>
<dbReference type="EC" id="2.7.7.23" evidence="1"/>
<dbReference type="EC" id="2.3.1.157" evidence="1"/>
<dbReference type="EMBL" id="CP000697">
    <property type="protein sequence ID" value="ABQ31470.1"/>
    <property type="molecule type" value="Genomic_DNA"/>
</dbReference>
<dbReference type="RefSeq" id="WP_012039928.1">
    <property type="nucleotide sequence ID" value="NC_009484.1"/>
</dbReference>
<dbReference type="SMR" id="A5G0T8"/>
<dbReference type="STRING" id="349163.Acry_2275"/>
<dbReference type="KEGG" id="acr:Acry_2275"/>
<dbReference type="eggNOG" id="COG1207">
    <property type="taxonomic scope" value="Bacteria"/>
</dbReference>
<dbReference type="HOGENOM" id="CLU_029499_15_2_5"/>
<dbReference type="UniPathway" id="UPA00113">
    <property type="reaction ID" value="UER00532"/>
</dbReference>
<dbReference type="UniPathway" id="UPA00113">
    <property type="reaction ID" value="UER00533"/>
</dbReference>
<dbReference type="UniPathway" id="UPA00973"/>
<dbReference type="Proteomes" id="UP000000245">
    <property type="component" value="Chromosome"/>
</dbReference>
<dbReference type="GO" id="GO:0005737">
    <property type="term" value="C:cytoplasm"/>
    <property type="evidence" value="ECO:0007669"/>
    <property type="project" value="UniProtKB-SubCell"/>
</dbReference>
<dbReference type="GO" id="GO:0016020">
    <property type="term" value="C:membrane"/>
    <property type="evidence" value="ECO:0007669"/>
    <property type="project" value="GOC"/>
</dbReference>
<dbReference type="GO" id="GO:0019134">
    <property type="term" value="F:glucosamine-1-phosphate N-acetyltransferase activity"/>
    <property type="evidence" value="ECO:0007669"/>
    <property type="project" value="UniProtKB-UniRule"/>
</dbReference>
<dbReference type="GO" id="GO:0000287">
    <property type="term" value="F:magnesium ion binding"/>
    <property type="evidence" value="ECO:0007669"/>
    <property type="project" value="UniProtKB-UniRule"/>
</dbReference>
<dbReference type="GO" id="GO:0003977">
    <property type="term" value="F:UDP-N-acetylglucosamine diphosphorylase activity"/>
    <property type="evidence" value="ECO:0007669"/>
    <property type="project" value="UniProtKB-UniRule"/>
</dbReference>
<dbReference type="GO" id="GO:0000902">
    <property type="term" value="P:cell morphogenesis"/>
    <property type="evidence" value="ECO:0007669"/>
    <property type="project" value="UniProtKB-UniRule"/>
</dbReference>
<dbReference type="GO" id="GO:0071555">
    <property type="term" value="P:cell wall organization"/>
    <property type="evidence" value="ECO:0007669"/>
    <property type="project" value="UniProtKB-KW"/>
</dbReference>
<dbReference type="GO" id="GO:0009245">
    <property type="term" value="P:lipid A biosynthetic process"/>
    <property type="evidence" value="ECO:0007669"/>
    <property type="project" value="UniProtKB-UniRule"/>
</dbReference>
<dbReference type="GO" id="GO:0009252">
    <property type="term" value="P:peptidoglycan biosynthetic process"/>
    <property type="evidence" value="ECO:0007669"/>
    <property type="project" value="UniProtKB-UniRule"/>
</dbReference>
<dbReference type="GO" id="GO:0008360">
    <property type="term" value="P:regulation of cell shape"/>
    <property type="evidence" value="ECO:0007669"/>
    <property type="project" value="UniProtKB-KW"/>
</dbReference>
<dbReference type="GO" id="GO:0006048">
    <property type="term" value="P:UDP-N-acetylglucosamine biosynthetic process"/>
    <property type="evidence" value="ECO:0007669"/>
    <property type="project" value="UniProtKB-UniPathway"/>
</dbReference>
<dbReference type="CDD" id="cd03353">
    <property type="entry name" value="LbH_GlmU_C"/>
    <property type="match status" value="1"/>
</dbReference>
<dbReference type="Gene3D" id="2.160.10.10">
    <property type="entry name" value="Hexapeptide repeat proteins"/>
    <property type="match status" value="1"/>
</dbReference>
<dbReference type="Gene3D" id="3.90.550.10">
    <property type="entry name" value="Spore Coat Polysaccharide Biosynthesis Protein SpsA, Chain A"/>
    <property type="match status" value="1"/>
</dbReference>
<dbReference type="HAMAP" id="MF_01631">
    <property type="entry name" value="GlmU"/>
    <property type="match status" value="1"/>
</dbReference>
<dbReference type="InterPro" id="IPR005882">
    <property type="entry name" value="Bifunctional_GlmU"/>
</dbReference>
<dbReference type="InterPro" id="IPR050065">
    <property type="entry name" value="GlmU-like"/>
</dbReference>
<dbReference type="InterPro" id="IPR038009">
    <property type="entry name" value="GlmU_C_LbH"/>
</dbReference>
<dbReference type="InterPro" id="IPR001451">
    <property type="entry name" value="Hexapep"/>
</dbReference>
<dbReference type="InterPro" id="IPR018357">
    <property type="entry name" value="Hexapep_transf_CS"/>
</dbReference>
<dbReference type="InterPro" id="IPR025877">
    <property type="entry name" value="MobA-like_NTP_Trfase"/>
</dbReference>
<dbReference type="InterPro" id="IPR029044">
    <property type="entry name" value="Nucleotide-diphossugar_trans"/>
</dbReference>
<dbReference type="InterPro" id="IPR011004">
    <property type="entry name" value="Trimer_LpxA-like_sf"/>
</dbReference>
<dbReference type="NCBIfam" id="TIGR01173">
    <property type="entry name" value="glmU"/>
    <property type="match status" value="1"/>
</dbReference>
<dbReference type="NCBIfam" id="NF010933">
    <property type="entry name" value="PRK14353.1"/>
    <property type="match status" value="1"/>
</dbReference>
<dbReference type="PANTHER" id="PTHR43584:SF3">
    <property type="entry name" value="BIFUNCTIONAL PROTEIN GLMU"/>
    <property type="match status" value="1"/>
</dbReference>
<dbReference type="PANTHER" id="PTHR43584">
    <property type="entry name" value="NUCLEOTIDYL TRANSFERASE"/>
    <property type="match status" value="1"/>
</dbReference>
<dbReference type="Pfam" id="PF00132">
    <property type="entry name" value="Hexapep"/>
    <property type="match status" value="1"/>
</dbReference>
<dbReference type="Pfam" id="PF12804">
    <property type="entry name" value="NTP_transf_3"/>
    <property type="match status" value="1"/>
</dbReference>
<dbReference type="SUPFAM" id="SSF53448">
    <property type="entry name" value="Nucleotide-diphospho-sugar transferases"/>
    <property type="match status" value="1"/>
</dbReference>
<dbReference type="SUPFAM" id="SSF51161">
    <property type="entry name" value="Trimeric LpxA-like enzymes"/>
    <property type="match status" value="1"/>
</dbReference>
<dbReference type="PROSITE" id="PS00101">
    <property type="entry name" value="HEXAPEP_TRANSFERASES"/>
    <property type="match status" value="1"/>
</dbReference>
<comment type="function">
    <text evidence="1">Catalyzes the last two sequential reactions in the de novo biosynthetic pathway for UDP-N-acetylglucosamine (UDP-GlcNAc). The C-terminal domain catalyzes the transfer of acetyl group from acetyl coenzyme A to glucosamine-1-phosphate (GlcN-1-P) to produce N-acetylglucosamine-1-phosphate (GlcNAc-1-P), which is converted into UDP-GlcNAc by the transfer of uridine 5-monophosphate (from uridine 5-triphosphate), a reaction catalyzed by the N-terminal domain.</text>
</comment>
<comment type="catalytic activity">
    <reaction evidence="1">
        <text>alpha-D-glucosamine 1-phosphate + acetyl-CoA = N-acetyl-alpha-D-glucosamine 1-phosphate + CoA + H(+)</text>
        <dbReference type="Rhea" id="RHEA:13725"/>
        <dbReference type="ChEBI" id="CHEBI:15378"/>
        <dbReference type="ChEBI" id="CHEBI:57287"/>
        <dbReference type="ChEBI" id="CHEBI:57288"/>
        <dbReference type="ChEBI" id="CHEBI:57776"/>
        <dbReference type="ChEBI" id="CHEBI:58516"/>
        <dbReference type="EC" id="2.3.1.157"/>
    </reaction>
</comment>
<comment type="catalytic activity">
    <reaction evidence="1">
        <text>N-acetyl-alpha-D-glucosamine 1-phosphate + UTP + H(+) = UDP-N-acetyl-alpha-D-glucosamine + diphosphate</text>
        <dbReference type="Rhea" id="RHEA:13509"/>
        <dbReference type="ChEBI" id="CHEBI:15378"/>
        <dbReference type="ChEBI" id="CHEBI:33019"/>
        <dbReference type="ChEBI" id="CHEBI:46398"/>
        <dbReference type="ChEBI" id="CHEBI:57705"/>
        <dbReference type="ChEBI" id="CHEBI:57776"/>
        <dbReference type="EC" id="2.7.7.23"/>
    </reaction>
</comment>
<comment type="cofactor">
    <cofactor evidence="1">
        <name>Mg(2+)</name>
        <dbReference type="ChEBI" id="CHEBI:18420"/>
    </cofactor>
    <text evidence="1">Binds 1 Mg(2+) ion per subunit.</text>
</comment>
<comment type="pathway">
    <text evidence="1">Nucleotide-sugar biosynthesis; UDP-N-acetyl-alpha-D-glucosamine biosynthesis; N-acetyl-alpha-D-glucosamine 1-phosphate from alpha-D-glucosamine 6-phosphate (route II): step 2/2.</text>
</comment>
<comment type="pathway">
    <text evidence="1">Nucleotide-sugar biosynthesis; UDP-N-acetyl-alpha-D-glucosamine biosynthesis; UDP-N-acetyl-alpha-D-glucosamine from N-acetyl-alpha-D-glucosamine 1-phosphate: step 1/1.</text>
</comment>
<comment type="pathway">
    <text evidence="1">Bacterial outer membrane biogenesis; LPS lipid A biosynthesis.</text>
</comment>
<comment type="subunit">
    <text evidence="1">Homotrimer.</text>
</comment>
<comment type="subcellular location">
    <subcellularLocation>
        <location evidence="1">Cytoplasm</location>
    </subcellularLocation>
</comment>
<comment type="similarity">
    <text evidence="1">In the N-terminal section; belongs to the N-acetylglucosamine-1-phosphate uridyltransferase family.</text>
</comment>
<comment type="similarity">
    <text evidence="1">In the C-terminal section; belongs to the transferase hexapeptide repeat family.</text>
</comment>
<proteinExistence type="inferred from homology"/>
<protein>
    <recommendedName>
        <fullName evidence="1">Bifunctional protein GlmU</fullName>
    </recommendedName>
    <domain>
        <recommendedName>
            <fullName evidence="1">UDP-N-acetylglucosamine pyrophosphorylase</fullName>
            <ecNumber evidence="1">2.7.7.23</ecNumber>
        </recommendedName>
        <alternativeName>
            <fullName evidence="1">N-acetylglucosamine-1-phosphate uridyltransferase</fullName>
        </alternativeName>
    </domain>
    <domain>
        <recommendedName>
            <fullName evidence="1">Glucosamine-1-phosphate N-acetyltransferase</fullName>
            <ecNumber evidence="1">2.3.1.157</ecNumber>
        </recommendedName>
    </domain>
</protein>
<keyword id="KW-0012">Acyltransferase</keyword>
<keyword id="KW-0133">Cell shape</keyword>
<keyword id="KW-0961">Cell wall biogenesis/degradation</keyword>
<keyword id="KW-0963">Cytoplasm</keyword>
<keyword id="KW-0460">Magnesium</keyword>
<keyword id="KW-0479">Metal-binding</keyword>
<keyword id="KW-0511">Multifunctional enzyme</keyword>
<keyword id="KW-0548">Nucleotidyltransferase</keyword>
<keyword id="KW-0573">Peptidoglycan synthesis</keyword>
<keyword id="KW-1185">Reference proteome</keyword>
<keyword id="KW-0677">Repeat</keyword>
<keyword id="KW-0808">Transferase</keyword>
<evidence type="ECO:0000255" key="1">
    <source>
        <dbReference type="HAMAP-Rule" id="MF_01631"/>
    </source>
</evidence>
<feature type="chain" id="PRO_1000056132" description="Bifunctional protein GlmU">
    <location>
        <begin position="1"/>
        <end position="437"/>
    </location>
</feature>
<feature type="region of interest" description="Pyrophosphorylase" evidence="1">
    <location>
        <begin position="1"/>
        <end position="223"/>
    </location>
</feature>
<feature type="region of interest" description="Linker" evidence="1">
    <location>
        <begin position="224"/>
        <end position="244"/>
    </location>
</feature>
<feature type="region of interest" description="N-acetyltransferase" evidence="1">
    <location>
        <begin position="245"/>
        <end position="437"/>
    </location>
</feature>
<feature type="active site" description="Proton acceptor" evidence="1">
    <location>
        <position position="340"/>
    </location>
</feature>
<feature type="binding site" evidence="1">
    <location>
        <begin position="8"/>
        <end position="11"/>
    </location>
    <ligand>
        <name>UDP-N-acetyl-alpha-D-glucosamine</name>
        <dbReference type="ChEBI" id="CHEBI:57705"/>
    </ligand>
</feature>
<feature type="binding site" evidence="1">
    <location>
        <position position="22"/>
    </location>
    <ligand>
        <name>UDP-N-acetyl-alpha-D-glucosamine</name>
        <dbReference type="ChEBI" id="CHEBI:57705"/>
    </ligand>
</feature>
<feature type="binding site" evidence="1">
    <location>
        <position position="70"/>
    </location>
    <ligand>
        <name>UDP-N-acetyl-alpha-D-glucosamine</name>
        <dbReference type="ChEBI" id="CHEBI:57705"/>
    </ligand>
</feature>
<feature type="binding site" evidence="1">
    <location>
        <begin position="75"/>
        <end position="76"/>
    </location>
    <ligand>
        <name>UDP-N-acetyl-alpha-D-glucosamine</name>
        <dbReference type="ChEBI" id="CHEBI:57705"/>
    </ligand>
</feature>
<feature type="binding site" evidence="1">
    <location>
        <begin position="96"/>
        <end position="98"/>
    </location>
    <ligand>
        <name>UDP-N-acetyl-alpha-D-glucosamine</name>
        <dbReference type="ChEBI" id="CHEBI:57705"/>
    </ligand>
</feature>
<feature type="binding site" evidence="1">
    <location>
        <position position="98"/>
    </location>
    <ligand>
        <name>Mg(2+)</name>
        <dbReference type="ChEBI" id="CHEBI:18420"/>
    </ligand>
</feature>
<feature type="binding site" evidence="1">
    <location>
        <position position="135"/>
    </location>
    <ligand>
        <name>UDP-N-acetyl-alpha-D-glucosamine</name>
        <dbReference type="ChEBI" id="CHEBI:57705"/>
    </ligand>
</feature>
<feature type="binding site" evidence="1">
    <location>
        <position position="149"/>
    </location>
    <ligand>
        <name>UDP-N-acetyl-alpha-D-glucosamine</name>
        <dbReference type="ChEBI" id="CHEBI:57705"/>
    </ligand>
</feature>
<feature type="binding site" evidence="1">
    <location>
        <position position="164"/>
    </location>
    <ligand>
        <name>UDP-N-acetyl-alpha-D-glucosamine</name>
        <dbReference type="ChEBI" id="CHEBI:57705"/>
    </ligand>
</feature>
<feature type="binding site" evidence="1">
    <location>
        <position position="221"/>
    </location>
    <ligand>
        <name>Mg(2+)</name>
        <dbReference type="ChEBI" id="CHEBI:18420"/>
    </ligand>
</feature>
<feature type="binding site" evidence="1">
    <location>
        <position position="221"/>
    </location>
    <ligand>
        <name>UDP-N-acetyl-alpha-D-glucosamine</name>
        <dbReference type="ChEBI" id="CHEBI:57705"/>
    </ligand>
</feature>
<feature type="binding site" evidence="1">
    <location>
        <position position="310"/>
    </location>
    <ligand>
        <name>UDP-N-acetyl-alpha-D-glucosamine</name>
        <dbReference type="ChEBI" id="CHEBI:57705"/>
    </ligand>
</feature>
<feature type="binding site" evidence="1">
    <location>
        <position position="328"/>
    </location>
    <ligand>
        <name>UDP-N-acetyl-alpha-D-glucosamine</name>
        <dbReference type="ChEBI" id="CHEBI:57705"/>
    </ligand>
</feature>
<feature type="binding site" evidence="1">
    <location>
        <position position="343"/>
    </location>
    <ligand>
        <name>UDP-N-acetyl-alpha-D-glucosamine</name>
        <dbReference type="ChEBI" id="CHEBI:57705"/>
    </ligand>
</feature>
<feature type="binding site" evidence="1">
    <location>
        <position position="354"/>
    </location>
    <ligand>
        <name>UDP-N-acetyl-alpha-D-glucosamine</name>
        <dbReference type="ChEBI" id="CHEBI:57705"/>
    </ligand>
</feature>
<feature type="binding site" evidence="1">
    <location>
        <position position="357"/>
    </location>
    <ligand>
        <name>acetyl-CoA</name>
        <dbReference type="ChEBI" id="CHEBI:57288"/>
    </ligand>
</feature>
<feature type="binding site" evidence="1">
    <location>
        <begin position="363"/>
        <end position="364"/>
    </location>
    <ligand>
        <name>acetyl-CoA</name>
        <dbReference type="ChEBI" id="CHEBI:57288"/>
    </ligand>
</feature>
<feature type="binding site" evidence="1">
    <location>
        <position position="382"/>
    </location>
    <ligand>
        <name>acetyl-CoA</name>
        <dbReference type="ChEBI" id="CHEBI:57288"/>
    </ligand>
</feature>
<feature type="binding site" evidence="1">
    <location>
        <position position="400"/>
    </location>
    <ligand>
        <name>acetyl-CoA</name>
        <dbReference type="ChEBI" id="CHEBI:57288"/>
    </ligand>
</feature>
<feature type="binding site" evidence="1">
    <location>
        <position position="417"/>
    </location>
    <ligand>
        <name>acetyl-CoA</name>
        <dbReference type="ChEBI" id="CHEBI:57288"/>
    </ligand>
</feature>
<sequence>MHNTAVILAAGLGTRMKSSRPKVLHHIAGRPMLAHLLAACKTAFAATVVVTGPDMDEVARAAAPHPTVIQRERLGTAHAALAAADHFGAGAVTLVYGDNPLVTGPTLQRLGARLGAGDAALVLLGTRPPEPGAFGRIIGPAGFAERIVEFADATEAERAVGLCNVGGFSAAAADMRRWLGNIGNDNAKGEYYLTDLVAVARAEGASVAVVEAPWDECRGVNSRAELAAAEAAMQSRLRAAALAAGVTMTAPETVFLAADTALAADVTIEPHVVFGPGVTVGPDVTIRAFSHLEGCAISAGAIIGPYARLRPGSDIGAGAHVGNFVELKAARLGAGAKANHLTYLGDAEIGPRANIGAGTITCNYDGFAKHRTTIGADAFIGSDVALVAPVSVGDRAIIAAGSVITDPVAADALALARGRQVEKPGRAAELRMTKGKR</sequence>
<organism>
    <name type="scientific">Acidiphilium cryptum (strain JF-5)</name>
    <dbReference type="NCBI Taxonomy" id="349163"/>
    <lineage>
        <taxon>Bacteria</taxon>
        <taxon>Pseudomonadati</taxon>
        <taxon>Pseudomonadota</taxon>
        <taxon>Alphaproteobacteria</taxon>
        <taxon>Acetobacterales</taxon>
        <taxon>Acidocellaceae</taxon>
        <taxon>Acidiphilium</taxon>
    </lineage>
</organism>